<name>HUTH_STAAB</name>
<proteinExistence type="inferred from homology"/>
<sequence>MTLYLDGETLTIEDIKSFLQQQSKVEIIDDALERVKKSRAVVERIIENEETVYGITTGFGLFSDVRIDPTQYNELQVNLIRSHACGLGEPFSKEVALVMMILRLNTLLKGHSGATLELVRQLQFFINERIIPIIPQQGSLGASGDLAPLSHLALALIGEGKVLHRGEEKDSDDVLRELNRQPLNLQAKEGLALINGTQAMTAQGVISYIEAEDLGYQSEWIAALTHQSLNGIIDAYRHDVHAVRNFQEQINVAARMRDWLEGSTLTTRQAEIRVQDAYTLRCIPQIHGASFQVFNYVKQQLEFEMNAANDNPLIFEEVNETFVISGGNFHGQPIAFALDHLKLGVSELANVSERRLERLVNPQLNGDLPAFLSPEPGLQSGAMIMQYAAASLVSENKTLAHPASVDSITSSANQEDHVSMGTTAARHGYQIIENTRRVLAIECVIALQATELKGVEGLSPKTRRKYDEFRSIVPSITHDRQFHRDIEAVAQYLKQSIYQTTACH</sequence>
<reference key="1">
    <citation type="journal article" date="2007" name="PLoS ONE">
        <title>Molecular correlates of host specialization in Staphylococcus aureus.</title>
        <authorList>
            <person name="Herron-Olson L."/>
            <person name="Fitzgerald J.R."/>
            <person name="Musser J.M."/>
            <person name="Kapur V."/>
        </authorList>
    </citation>
    <scope>NUCLEOTIDE SEQUENCE [LARGE SCALE GENOMIC DNA]</scope>
    <source>
        <strain>bovine RF122 / ET3-1</strain>
    </source>
</reference>
<accession>Q2YUR3</accession>
<feature type="chain" id="PRO_1000021571" description="Histidine ammonia-lyase">
    <location>
        <begin position="1"/>
        <end position="504"/>
    </location>
</feature>
<feature type="modified residue" description="2,3-didehydroalanine (Ser)" evidence="1">
    <location>
        <position position="143"/>
    </location>
</feature>
<feature type="cross-link" description="5-imidazolinone (Ala-Gly)" evidence="1">
    <location>
        <begin position="142"/>
        <end position="144"/>
    </location>
</feature>
<protein>
    <recommendedName>
        <fullName evidence="1">Histidine ammonia-lyase</fullName>
        <shortName evidence="1">Histidase</shortName>
        <ecNumber evidence="1">4.3.1.3</ecNumber>
    </recommendedName>
</protein>
<comment type="catalytic activity">
    <reaction evidence="1">
        <text>L-histidine = trans-urocanate + NH4(+)</text>
        <dbReference type="Rhea" id="RHEA:21232"/>
        <dbReference type="ChEBI" id="CHEBI:17771"/>
        <dbReference type="ChEBI" id="CHEBI:28938"/>
        <dbReference type="ChEBI" id="CHEBI:57595"/>
        <dbReference type="EC" id="4.3.1.3"/>
    </reaction>
</comment>
<comment type="pathway">
    <text evidence="1">Amino-acid degradation; L-histidine degradation into L-glutamate; N-formimidoyl-L-glutamate from L-histidine: step 1/3.</text>
</comment>
<comment type="subcellular location">
    <subcellularLocation>
        <location evidence="1">Cytoplasm</location>
    </subcellularLocation>
</comment>
<comment type="PTM">
    <text evidence="1">Contains an active site 4-methylidene-imidazol-5-one (MIO), which is formed autocatalytically by cyclization and dehydration of residues Ala-Ser-Gly.</text>
</comment>
<comment type="similarity">
    <text evidence="1">Belongs to the PAL/histidase family.</text>
</comment>
<organism>
    <name type="scientific">Staphylococcus aureus (strain bovine RF122 / ET3-1)</name>
    <dbReference type="NCBI Taxonomy" id="273036"/>
    <lineage>
        <taxon>Bacteria</taxon>
        <taxon>Bacillati</taxon>
        <taxon>Bacillota</taxon>
        <taxon>Bacilli</taxon>
        <taxon>Bacillales</taxon>
        <taxon>Staphylococcaceae</taxon>
        <taxon>Staphylococcus</taxon>
    </lineage>
</organism>
<dbReference type="EC" id="4.3.1.3" evidence="1"/>
<dbReference type="EMBL" id="AJ938182">
    <property type="protein sequence ID" value="CAI79696.1"/>
    <property type="molecule type" value="Genomic_DNA"/>
</dbReference>
<dbReference type="RefSeq" id="WP_000177478.1">
    <property type="nucleotide sequence ID" value="NC_007622.1"/>
</dbReference>
<dbReference type="SMR" id="Q2YUR3"/>
<dbReference type="KEGG" id="sab:SAB0008"/>
<dbReference type="HOGENOM" id="CLU_014801_4_0_9"/>
<dbReference type="UniPathway" id="UPA00379">
    <property type="reaction ID" value="UER00549"/>
</dbReference>
<dbReference type="GO" id="GO:0005737">
    <property type="term" value="C:cytoplasm"/>
    <property type="evidence" value="ECO:0007669"/>
    <property type="project" value="UniProtKB-SubCell"/>
</dbReference>
<dbReference type="GO" id="GO:0004397">
    <property type="term" value="F:histidine ammonia-lyase activity"/>
    <property type="evidence" value="ECO:0007669"/>
    <property type="project" value="UniProtKB-UniRule"/>
</dbReference>
<dbReference type="GO" id="GO:0019556">
    <property type="term" value="P:L-histidine catabolic process to glutamate and formamide"/>
    <property type="evidence" value="ECO:0007669"/>
    <property type="project" value="UniProtKB-UniPathway"/>
</dbReference>
<dbReference type="GO" id="GO:0019557">
    <property type="term" value="P:L-histidine catabolic process to glutamate and formate"/>
    <property type="evidence" value="ECO:0007669"/>
    <property type="project" value="UniProtKB-UniPathway"/>
</dbReference>
<dbReference type="CDD" id="cd00332">
    <property type="entry name" value="PAL-HAL"/>
    <property type="match status" value="1"/>
</dbReference>
<dbReference type="FunFam" id="1.10.275.10:FF:000008">
    <property type="entry name" value="Histidine ammonia-lyase"/>
    <property type="match status" value="1"/>
</dbReference>
<dbReference type="FunFam" id="1.20.200.10:FF:000003">
    <property type="entry name" value="Histidine ammonia-lyase"/>
    <property type="match status" value="1"/>
</dbReference>
<dbReference type="Gene3D" id="1.20.200.10">
    <property type="entry name" value="Fumarase/aspartase (Central domain)"/>
    <property type="match status" value="1"/>
</dbReference>
<dbReference type="Gene3D" id="1.10.275.10">
    <property type="entry name" value="Fumarase/aspartase (N-terminal domain)"/>
    <property type="match status" value="1"/>
</dbReference>
<dbReference type="HAMAP" id="MF_00229">
    <property type="entry name" value="His_ammonia_lyase"/>
    <property type="match status" value="1"/>
</dbReference>
<dbReference type="InterPro" id="IPR001106">
    <property type="entry name" value="Aromatic_Lyase"/>
</dbReference>
<dbReference type="InterPro" id="IPR024083">
    <property type="entry name" value="Fumarase/histidase_N"/>
</dbReference>
<dbReference type="InterPro" id="IPR005921">
    <property type="entry name" value="HutH"/>
</dbReference>
<dbReference type="InterPro" id="IPR008948">
    <property type="entry name" value="L-Aspartase-like"/>
</dbReference>
<dbReference type="InterPro" id="IPR022313">
    <property type="entry name" value="Phe/His_NH3-lyase_AS"/>
</dbReference>
<dbReference type="NCBIfam" id="TIGR01225">
    <property type="entry name" value="hutH"/>
    <property type="match status" value="1"/>
</dbReference>
<dbReference type="NCBIfam" id="NF006871">
    <property type="entry name" value="PRK09367.1"/>
    <property type="match status" value="1"/>
</dbReference>
<dbReference type="PANTHER" id="PTHR10362">
    <property type="entry name" value="HISTIDINE AMMONIA-LYASE"/>
    <property type="match status" value="1"/>
</dbReference>
<dbReference type="Pfam" id="PF00221">
    <property type="entry name" value="Lyase_aromatic"/>
    <property type="match status" value="1"/>
</dbReference>
<dbReference type="SUPFAM" id="SSF48557">
    <property type="entry name" value="L-aspartase-like"/>
    <property type="match status" value="1"/>
</dbReference>
<dbReference type="PROSITE" id="PS00488">
    <property type="entry name" value="PAL_HISTIDASE"/>
    <property type="match status" value="1"/>
</dbReference>
<gene>
    <name evidence="1" type="primary">hutH</name>
    <name type="ordered locus">SAB0008</name>
</gene>
<evidence type="ECO:0000255" key="1">
    <source>
        <dbReference type="HAMAP-Rule" id="MF_00229"/>
    </source>
</evidence>
<keyword id="KW-0963">Cytoplasm</keyword>
<keyword id="KW-0369">Histidine metabolism</keyword>
<keyword id="KW-0456">Lyase</keyword>